<organism>
    <name type="scientific">Bovine herpesvirus 1.1 (strain Cooper)</name>
    <name type="common">BoHV-1</name>
    <name type="synonym">Infectious bovine rhinotracheitis virus</name>
    <dbReference type="NCBI Taxonomy" id="10323"/>
    <lineage>
        <taxon>Viruses</taxon>
        <taxon>Duplodnaviria</taxon>
        <taxon>Heunggongvirae</taxon>
        <taxon>Peploviricota</taxon>
        <taxon>Herviviricetes</taxon>
        <taxon>Herpesvirales</taxon>
        <taxon>Orthoherpesviridae</taxon>
        <taxon>Alphaherpesvirinae</taxon>
        <taxon>Varicellovirus</taxon>
        <taxon>Varicellovirus bovinealpha1</taxon>
    </lineage>
</organism>
<accession>P30022</accession>
<accession>Q77CE3</accession>
<protein>
    <recommendedName>
        <fullName>Tegument protein VP22</fullName>
    </recommendedName>
</protein>
<reference key="1">
    <citation type="journal article" date="1996" name="Vet. Microbiol.">
        <title>Gene contents in a 31-kb segment at the left genome end of bovine herpesvirus-1.</title>
        <authorList>
            <person name="Schwyzer M."/>
            <person name="Styger D."/>
            <person name="Vogt B."/>
            <person name="Lowery D.E."/>
            <person name="Simard C."/>
            <person name="LaBoissiere S."/>
            <person name="Misra V."/>
            <person name="Vlcek C."/>
            <person name="Paces V."/>
        </authorList>
    </citation>
    <scope>NUCLEOTIDE SEQUENCE [GENOMIC DNA]</scope>
</reference>
<reference key="2">
    <citation type="journal article" date="1995" name="J. Virol.">
        <title>Characterization of bovine herpesvirus 1 UL49 homolog gene and product: bovine herpesvirus 1 UL49 homolog is dispensable for virus growth.</title>
        <authorList>
            <person name="Liang X."/>
            <person name="Chow B."/>
            <person name="Li Y."/>
            <person name="Raggo C."/>
            <person name="Yoo D."/>
            <person name="Attah-Poku S."/>
            <person name="Babiuk L.A."/>
        </authorList>
    </citation>
    <scope>NUCLEOTIDE SEQUENCE [GENOMIC DNA]</scope>
</reference>
<reference key="3">
    <citation type="submission" date="1997-09" db="EMBL/GenBank/DDBJ databases">
        <title>Complete DNA sequence of bovine herpesvirus 1.</title>
        <authorList>
            <person name="Schwyzer M."/>
            <person name="Paces V."/>
            <person name="Letchworth G.J."/>
            <person name="Misra V."/>
            <person name="Buhk H.J."/>
            <person name="Lowery D.E."/>
            <person name="Simard C."/>
            <person name="Bello L.J."/>
            <person name="Thiry E."/>
            <person name="Vlcek C."/>
        </authorList>
    </citation>
    <scope>NUCLEOTIDE SEQUENCE [LARGE SCALE GENOMIC DNA]</scope>
</reference>
<reference key="4">
    <citation type="journal article" date="1993" name="Virology">
        <title>Identification and deletion mutagenesis of the bovine herpesvirus 1 dUTPase gene and a gene homologous to herpes simplex virus UL49.5.</title>
        <authorList>
            <person name="Liang X."/>
            <person name="Tang M."/>
            <person name="Manns B."/>
            <person name="Babiuk L.A."/>
            <person name="Zamb T.J."/>
        </authorList>
    </citation>
    <scope>NUCLEOTIDE SEQUENCE [GENOMIC DNA] OF 1-95</scope>
</reference>
<reference key="5">
    <citation type="journal article" date="1992" name="Gene">
        <title>Sequences of the bovine herpesvirus 1 homologue of herpes simplex virus type-1 alpha-trans-inducing factor (UL48).</title>
        <authorList>
            <person name="Carpenter D.E."/>
            <person name="Misra V."/>
        </authorList>
    </citation>
    <scope>NUCLEOTIDE SEQUENCE [GENOMIC DNA] OF 64-258</scope>
</reference>
<reference key="6">
    <citation type="journal article" date="2005" name="J. Virol.">
        <title>Characterization of the nuclear localization and nuclear export signals of bovine herpesvirus 1 VP22.</title>
        <authorList>
            <person name="Zheng C."/>
            <person name="Brownlie R."/>
            <person name="Babiuk L.A."/>
            <person name="van Drunen Littel-van den Hurk S."/>
        </authorList>
    </citation>
    <scope>SUBCELLULAR LOCATION</scope>
    <scope>NUCLEAR LOCALIZATION SIGNAL</scope>
    <scope>NUCLEAR EXPORT SIGNAL</scope>
    <scope>MUTAGENESIS OF 131-PRO--ARG-134</scope>
    <source>
        <strain>P8-2</strain>
    </source>
</reference>
<feature type="chain" id="PRO_0000116094" description="Tegument protein VP22">
    <location>
        <begin position="1"/>
        <end position="258"/>
    </location>
</feature>
<feature type="region of interest" description="Disordered" evidence="2">
    <location>
        <begin position="66"/>
        <end position="143"/>
    </location>
</feature>
<feature type="region of interest" description="Disordered" evidence="2">
    <location>
        <begin position="234"/>
        <end position="258"/>
    </location>
</feature>
<feature type="short sequence motif" description="Nuclear localization signal" evidence="3">
    <location>
        <begin position="131"/>
        <end position="134"/>
    </location>
</feature>
<feature type="short sequence motif" description="Nuclear export signal" evidence="3">
    <location>
        <begin position="204"/>
        <end position="216"/>
    </location>
</feature>
<feature type="compositionally biased region" description="Low complexity" evidence="2">
    <location>
        <begin position="77"/>
        <end position="118"/>
    </location>
</feature>
<feature type="compositionally biased region" description="Basic and acidic residues" evidence="2">
    <location>
        <begin position="249"/>
        <end position="258"/>
    </location>
</feature>
<feature type="mutagenesis site" description="Complete loss of nuclear localization." evidence="3">
    <original>PRPR</original>
    <variation>AAAA</variation>
    <location>
        <begin position="131"/>
        <end position="134"/>
    </location>
</feature>
<feature type="mutagenesis site" description="Complete loss of cytoplasmic localization.">
    <original>LDRMLKSAAIRIL</original>
    <variation>ADRMAKSAAARAA</variation>
    <location>
        <begin position="204"/>
        <end position="216"/>
    </location>
</feature>
<sequence length="258" mass="26865">MARFHRPSEDEDDYEYSDLWVRENSLYDYESGSDDHVYEELRAATSGPEPSGRRASVRACASAAAVQPAARGRDRAAAAGTTVAAPAAAPARRSSSRASSRPPRAAADPPVLRPATRGSSGGAGAVAVGPPRPRAPPGANAVASGRPLAFSAAPKTPKAPWCGPTHAYNRTIFCEAVALVAAEYARQAAASVWDSDPPKSNERLDRMLKSAAIRILVCEGSGLLAAANDILAARAQRPAARGSTSGGESRLRGERARP</sequence>
<name>VP22_BHV1C</name>
<keyword id="KW-1035">Host cytoplasm</keyword>
<keyword id="KW-1040">Host Golgi apparatus</keyword>
<keyword id="KW-1048">Host nucleus</keyword>
<keyword id="KW-0597">Phosphoprotein</keyword>
<keyword id="KW-0946">Virion</keyword>
<keyword id="KW-0920">Virion tegument</keyword>
<proteinExistence type="evidence at protein level"/>
<organismHost>
    <name type="scientific">Bos taurus</name>
    <name type="common">Bovine</name>
    <dbReference type="NCBI Taxonomy" id="9913"/>
</organismHost>
<dbReference type="EMBL" id="Z54206">
    <property type="protein sequence ID" value="CAA90920.1"/>
    <property type="molecule type" value="Genomic_DNA"/>
</dbReference>
<dbReference type="EMBL" id="U21137">
    <property type="protein sequence ID" value="AAA85715.1"/>
    <property type="molecule type" value="Genomic_DNA"/>
</dbReference>
<dbReference type="EMBL" id="AJ004801">
    <property type="protein sequence ID" value="CAA06085.1"/>
    <property type="molecule type" value="Genomic_DNA"/>
</dbReference>
<dbReference type="EMBL" id="Z11610">
    <property type="status" value="NOT_ANNOTATED_CDS"/>
    <property type="molecule type" value="Genomic_DNA"/>
</dbReference>
<dbReference type="PIR" id="S24228">
    <property type="entry name" value="S24228"/>
</dbReference>
<dbReference type="RefSeq" id="NP_045310.1">
    <property type="nucleotide sequence ID" value="NC_001847.1"/>
</dbReference>
<dbReference type="SMR" id="P30022"/>
<dbReference type="IntAct" id="P30022">
    <property type="interactions" value="2"/>
</dbReference>
<dbReference type="Proteomes" id="UP000202075">
    <property type="component" value="Segment"/>
</dbReference>
<dbReference type="GO" id="GO:0030430">
    <property type="term" value="C:host cell cytoplasm"/>
    <property type="evidence" value="ECO:0000315"/>
    <property type="project" value="AgBase"/>
</dbReference>
<dbReference type="GO" id="GO:0044177">
    <property type="term" value="C:host cell Golgi apparatus"/>
    <property type="evidence" value="ECO:0007669"/>
    <property type="project" value="UniProtKB-SubCell"/>
</dbReference>
<dbReference type="GO" id="GO:0042025">
    <property type="term" value="C:host cell nucleus"/>
    <property type="evidence" value="ECO:0000314"/>
    <property type="project" value="UniProtKB"/>
</dbReference>
<dbReference type="GO" id="GO:0019033">
    <property type="term" value="C:viral tegument"/>
    <property type="evidence" value="ECO:0007669"/>
    <property type="project" value="UniProtKB-SubCell"/>
</dbReference>
<dbReference type="GO" id="GO:0042393">
    <property type="term" value="F:histone binding"/>
    <property type="evidence" value="ECO:0000315"/>
    <property type="project" value="AgBase"/>
</dbReference>
<dbReference type="GO" id="GO:0039525">
    <property type="term" value="P:symbiont-mediated perturbation of host chromatin organization"/>
    <property type="evidence" value="ECO:0000315"/>
    <property type="project" value="GO_Central"/>
</dbReference>
<dbReference type="InterPro" id="IPR006908">
    <property type="entry name" value="Herpes_UL49"/>
</dbReference>
<dbReference type="Pfam" id="PF04823">
    <property type="entry name" value="Herpes_UL49_2"/>
    <property type="match status" value="1"/>
</dbReference>
<comment type="function">
    <text evidence="1">Tegument protein that plays different roles during the time course of infection (By similarity). Participates in both the accumulation of viral mRNAs and viral protein translation at late time of infection (By similarity). Modulates the RNase activity of the virion host shutoff protein UL41 probably to ensure necessary levels of key cellular mRNAs and proteins (By similarity). Plays a role in microtubule reorganization that occurs after viral infection by stabilizing microtubule network (By similarity). Plays a role in the inhibition of host innate immune system by targeting the CGAS enzymatic activity which is the principal cytosolic DNA sensor that detects invading viral DNA. Acts by mediating disruption of liquid-like droplets in which CGAS is activated, thereby preventing CGAS activity (By similarity).</text>
</comment>
<comment type="subunit">
    <text evidence="1">Interacts with gE (via C-terminus); this interaction is necessary for the recruitment of VP22 to the Golgi and its packaging into virions (By similarity). Interacts with gM (via C-terminus) (By similarity). Interacts with VP16; this interaction allows the formation of a tripartite complex composed of VP16, VP22 and UL41/VHS (By similarity). Interacts with the capsid-binding protein UL16 (By similarity). Interacts with host CGAS (By similarity).</text>
</comment>
<comment type="interaction">
    <interactant intactId="EBI-11420994">
        <id>P30022</id>
    </interactant>
    <interactant intactId="EBI-11420970">
        <id>Q76PF3</id>
        <label>US3</label>
    </interactant>
    <organismsDiffer>true</organismsDiffer>
    <experiments>3</experiments>
</comment>
<comment type="subcellular location">
    <subcellularLocation>
        <location evidence="1">Virion tegument</location>
    </subcellularLocation>
    <subcellularLocation>
        <location evidence="3">Host cytoplasm</location>
    </subcellularLocation>
    <subcellularLocation>
        <location evidence="3">Host nucleus</location>
    </subcellularLocation>
    <subcellularLocation>
        <location evidence="1">Host Golgi apparatus</location>
    </subcellularLocation>
    <text evidence="1">One of the most abundant tegument protein (about 2000 copies per virion). Localizes in the cytoplasm at 8 hours postinfection and in the nucleus at 16 hours postinfection. During virion morphogenesis, this protein probably accumulates at the trans-Golgi where secondary envelopment occurs.</text>
</comment>
<comment type="PTM">
    <text evidence="1">Highly phosphorylated in the host cell. Packaging is selective for underphosphorylated forms.</text>
</comment>
<comment type="similarity">
    <text evidence="4">Belongs to the alphaherpesvirinae VP22 tegument protein family.</text>
</comment>
<gene>
    <name type="ORF">UL49</name>
</gene>
<evidence type="ECO:0000250" key="1">
    <source>
        <dbReference type="UniProtKB" id="P10233"/>
    </source>
</evidence>
<evidence type="ECO:0000256" key="2">
    <source>
        <dbReference type="SAM" id="MobiDB-lite"/>
    </source>
</evidence>
<evidence type="ECO:0000269" key="3">
    <source>
    </source>
</evidence>
<evidence type="ECO:0000305" key="4"/>